<proteinExistence type="inferred from homology"/>
<organism>
    <name type="scientific">Aeropyrum pernix (strain ATCC 700893 / DSM 11879 / JCM 9820 / NBRC 100138 / K1)</name>
    <dbReference type="NCBI Taxonomy" id="272557"/>
    <lineage>
        <taxon>Archaea</taxon>
        <taxon>Thermoproteota</taxon>
        <taxon>Thermoprotei</taxon>
        <taxon>Desulfurococcales</taxon>
        <taxon>Desulfurococcaceae</taxon>
        <taxon>Aeropyrum</taxon>
    </lineage>
</organism>
<accession>Q9YEC1</accession>
<protein>
    <recommendedName>
        <fullName>Preprotein translocase subunit SecG</fullName>
    </recommendedName>
    <alternativeName>
        <fullName>Protein transport protein Sec61 subunit beta homolog</fullName>
    </alternativeName>
</protein>
<evidence type="ECO:0000250" key="1"/>
<evidence type="ECO:0000305" key="2"/>
<name>SECG_AERPE</name>
<keyword id="KW-1003">Cell membrane</keyword>
<keyword id="KW-0472">Membrane</keyword>
<keyword id="KW-0653">Protein transport</keyword>
<keyword id="KW-1185">Reference proteome</keyword>
<keyword id="KW-0811">Translocation</keyword>
<keyword id="KW-0812">Transmembrane</keyword>
<keyword id="KW-1133">Transmembrane helix</keyword>
<keyword id="KW-0813">Transport</keyword>
<feature type="chain" id="PRO_0000157263" description="Preprotein translocase subunit SecG">
    <location>
        <begin position="1"/>
        <end position="59"/>
    </location>
</feature>
<feature type="topological domain" description="Cytoplasmic" evidence="1">
    <location>
        <begin position="1"/>
        <end position="33"/>
    </location>
</feature>
<feature type="transmembrane region" description="Helical" evidence="1">
    <location>
        <begin position="34"/>
        <end position="53"/>
    </location>
</feature>
<feature type="topological domain" description="Extracellular" evidence="1">
    <location>
        <begin position="54"/>
        <end position="59"/>
    </location>
</feature>
<sequence>MSVRRRRERRATPVTAAGLLSFYEEYEGKIKISPTIVVGAAILVSAVVAAAHIFLPAVP</sequence>
<gene>
    <name type="primary">secG</name>
    <name type="ordered locus">APE_0650a.1</name>
    <name type="ORF">APES028</name>
</gene>
<dbReference type="EMBL" id="BA000002">
    <property type="protein sequence ID" value="BAA79625.2"/>
    <property type="molecule type" value="Genomic_DNA"/>
</dbReference>
<dbReference type="PIR" id="A72653">
    <property type="entry name" value="A72653"/>
</dbReference>
<dbReference type="STRING" id="272557.APE_0650a.1"/>
<dbReference type="EnsemblBacteria" id="BAA79625">
    <property type="protein sequence ID" value="BAA79625"/>
    <property type="gene ID" value="APE_0650a.1"/>
</dbReference>
<dbReference type="KEGG" id="ape:APE_0650a.1"/>
<dbReference type="eggNOG" id="arCOG02957">
    <property type="taxonomic scope" value="Archaea"/>
</dbReference>
<dbReference type="Proteomes" id="UP000002518">
    <property type="component" value="Chromosome"/>
</dbReference>
<dbReference type="GO" id="GO:0005886">
    <property type="term" value="C:plasma membrane"/>
    <property type="evidence" value="ECO:0007669"/>
    <property type="project" value="UniProtKB-SubCell"/>
</dbReference>
<dbReference type="GO" id="GO:0015031">
    <property type="term" value="P:protein transport"/>
    <property type="evidence" value="ECO:0007669"/>
    <property type="project" value="UniProtKB-UniRule"/>
</dbReference>
<dbReference type="HAMAP" id="MF_00751">
    <property type="entry name" value="SecG"/>
    <property type="match status" value="1"/>
</dbReference>
<dbReference type="InterPro" id="IPR023531">
    <property type="entry name" value="Preprot_translocase_SecG"/>
</dbReference>
<dbReference type="InterPro" id="IPR016482">
    <property type="entry name" value="SecG/Sec61-beta/Sbh"/>
</dbReference>
<dbReference type="Pfam" id="PF03911">
    <property type="entry name" value="Sec61_beta"/>
    <property type="match status" value="1"/>
</dbReference>
<reference key="1">
    <citation type="journal article" date="1999" name="DNA Res.">
        <title>Complete genome sequence of an aerobic hyper-thermophilic crenarchaeon, Aeropyrum pernix K1.</title>
        <authorList>
            <person name="Kawarabayasi Y."/>
            <person name="Hino Y."/>
            <person name="Horikawa H."/>
            <person name="Yamazaki S."/>
            <person name="Haikawa Y."/>
            <person name="Jin-no K."/>
            <person name="Takahashi M."/>
            <person name="Sekine M."/>
            <person name="Baba S."/>
            <person name="Ankai A."/>
            <person name="Kosugi H."/>
            <person name="Hosoyama A."/>
            <person name="Fukui S."/>
            <person name="Nagai Y."/>
            <person name="Nishijima K."/>
            <person name="Nakazawa H."/>
            <person name="Takamiya M."/>
            <person name="Masuda S."/>
            <person name="Funahashi T."/>
            <person name="Tanaka T."/>
            <person name="Kudoh Y."/>
            <person name="Yamazaki J."/>
            <person name="Kushida N."/>
            <person name="Oguchi A."/>
            <person name="Aoki K."/>
            <person name="Kubota K."/>
            <person name="Nakamura Y."/>
            <person name="Nomura N."/>
            <person name="Sako Y."/>
            <person name="Kikuchi H."/>
        </authorList>
    </citation>
    <scope>NUCLEOTIDE SEQUENCE [LARGE SCALE GENOMIC DNA]</scope>
    <source>
        <strain>ATCC 700893 / DSM 11879 / JCM 9820 / NBRC 100138 / K1</strain>
    </source>
</reference>
<comment type="function">
    <text evidence="1">Involved in protein export. The function of the beta subunit is unknown, but it may be involved in stabilization of the trimeric complex (By similarity).</text>
</comment>
<comment type="subunit">
    <text evidence="1">Component of the protein translocase complex. Heterotrimer consisting of alpha (SecY), beta (SecG) and gamma (SecE) subunits. Can form oligomers of the heterotrimer (By similarity).</text>
</comment>
<comment type="subcellular location">
    <subcellularLocation>
        <location evidence="1">Cell membrane</location>
        <topology evidence="1">Single-pass membrane protein</topology>
    </subcellularLocation>
</comment>
<comment type="similarity">
    <text evidence="2">Belongs to the SEC61-beta family.</text>
</comment>